<name>DTD_BURCM</name>
<reference key="1">
    <citation type="submission" date="2006-08" db="EMBL/GenBank/DDBJ databases">
        <title>Complete sequence of chromosome 1 of Burkholderia cepacia AMMD.</title>
        <authorList>
            <person name="Copeland A."/>
            <person name="Lucas S."/>
            <person name="Lapidus A."/>
            <person name="Barry K."/>
            <person name="Detter J.C."/>
            <person name="Glavina del Rio T."/>
            <person name="Hammon N."/>
            <person name="Israni S."/>
            <person name="Pitluck S."/>
            <person name="Bruce D."/>
            <person name="Chain P."/>
            <person name="Malfatti S."/>
            <person name="Shin M."/>
            <person name="Vergez L."/>
            <person name="Schmutz J."/>
            <person name="Larimer F."/>
            <person name="Land M."/>
            <person name="Hauser L."/>
            <person name="Kyrpides N."/>
            <person name="Kim E."/>
            <person name="Parke J."/>
            <person name="Coenye T."/>
            <person name="Konstantinidis K."/>
            <person name="Ramette A."/>
            <person name="Tiedje J."/>
            <person name="Richardson P."/>
        </authorList>
    </citation>
    <scope>NUCLEOTIDE SEQUENCE [LARGE SCALE GENOMIC DNA]</scope>
    <source>
        <strain>ATCC BAA-244 / DSM 16087 / CCUG 44356 / LMG 19182 / AMMD</strain>
    </source>
</reference>
<organism>
    <name type="scientific">Burkholderia ambifaria (strain ATCC BAA-244 / DSM 16087 / CCUG 44356 / LMG 19182 / AMMD)</name>
    <name type="common">Burkholderia cepacia (strain AMMD)</name>
    <dbReference type="NCBI Taxonomy" id="339670"/>
    <lineage>
        <taxon>Bacteria</taxon>
        <taxon>Pseudomonadati</taxon>
        <taxon>Pseudomonadota</taxon>
        <taxon>Betaproteobacteria</taxon>
        <taxon>Burkholderiales</taxon>
        <taxon>Burkholderiaceae</taxon>
        <taxon>Burkholderia</taxon>
        <taxon>Burkholderia cepacia complex</taxon>
    </lineage>
</organism>
<evidence type="ECO:0000255" key="1">
    <source>
        <dbReference type="HAMAP-Rule" id="MF_00518"/>
    </source>
</evidence>
<gene>
    <name evidence="1" type="primary">dtd</name>
    <name type="ordered locus">Bamb_0578</name>
</gene>
<keyword id="KW-0963">Cytoplasm</keyword>
<keyword id="KW-0378">Hydrolase</keyword>
<keyword id="KW-0694">RNA-binding</keyword>
<keyword id="KW-0820">tRNA-binding</keyword>
<proteinExistence type="inferred from homology"/>
<sequence length="152" mass="15983">MIALIQRVKRADVRVGDRTTGEIGAGLLALVCAERGDNEAAADKLLAKLLGYRVFSDAAGKMNLPVSNIDGAGGAGGLLLVSQFTLAADTNSGLRPSFTPAAPPDEGARLFDYFVAAARERHPVVETGEFGADMQVSLVNDGPVTFWLQVRP</sequence>
<accession>Q0BI86</accession>
<dbReference type="EC" id="3.1.1.96" evidence="1"/>
<dbReference type="EMBL" id="CP000440">
    <property type="protein sequence ID" value="ABI86137.1"/>
    <property type="molecule type" value="Genomic_DNA"/>
</dbReference>
<dbReference type="RefSeq" id="WP_011655980.1">
    <property type="nucleotide sequence ID" value="NC_008390.1"/>
</dbReference>
<dbReference type="SMR" id="Q0BI86"/>
<dbReference type="GeneID" id="93084006"/>
<dbReference type="KEGG" id="bam:Bamb_0578"/>
<dbReference type="PATRIC" id="fig|339670.21.peg.1019"/>
<dbReference type="eggNOG" id="COG1490">
    <property type="taxonomic scope" value="Bacteria"/>
</dbReference>
<dbReference type="Proteomes" id="UP000000662">
    <property type="component" value="Chromosome 1"/>
</dbReference>
<dbReference type="GO" id="GO:0005737">
    <property type="term" value="C:cytoplasm"/>
    <property type="evidence" value="ECO:0007669"/>
    <property type="project" value="UniProtKB-SubCell"/>
</dbReference>
<dbReference type="GO" id="GO:0051500">
    <property type="term" value="F:D-tyrosyl-tRNA(Tyr) deacylase activity"/>
    <property type="evidence" value="ECO:0007669"/>
    <property type="project" value="TreeGrafter"/>
</dbReference>
<dbReference type="GO" id="GO:0106026">
    <property type="term" value="F:Gly-tRNA(Ala) deacylase activity"/>
    <property type="evidence" value="ECO:0007669"/>
    <property type="project" value="UniProtKB-UniRule"/>
</dbReference>
<dbReference type="GO" id="GO:0043908">
    <property type="term" value="F:Ser(Gly)-tRNA(Ala) hydrolase activity"/>
    <property type="evidence" value="ECO:0007669"/>
    <property type="project" value="UniProtKB-UniRule"/>
</dbReference>
<dbReference type="GO" id="GO:0000049">
    <property type="term" value="F:tRNA binding"/>
    <property type="evidence" value="ECO:0007669"/>
    <property type="project" value="UniProtKB-UniRule"/>
</dbReference>
<dbReference type="GO" id="GO:0019478">
    <property type="term" value="P:D-amino acid catabolic process"/>
    <property type="evidence" value="ECO:0007669"/>
    <property type="project" value="UniProtKB-UniRule"/>
</dbReference>
<dbReference type="FunFam" id="3.50.80.10:FF:000001">
    <property type="entry name" value="D-aminoacyl-tRNA deacylase"/>
    <property type="match status" value="1"/>
</dbReference>
<dbReference type="Gene3D" id="3.50.80.10">
    <property type="entry name" value="D-tyrosyl-tRNA(Tyr) deacylase"/>
    <property type="match status" value="1"/>
</dbReference>
<dbReference type="HAMAP" id="MF_00518">
    <property type="entry name" value="Deacylase_Dtd"/>
    <property type="match status" value="1"/>
</dbReference>
<dbReference type="InterPro" id="IPR003732">
    <property type="entry name" value="Daa-tRNA_deacyls_DTD"/>
</dbReference>
<dbReference type="InterPro" id="IPR023509">
    <property type="entry name" value="DTD-like_sf"/>
</dbReference>
<dbReference type="NCBIfam" id="TIGR00256">
    <property type="entry name" value="D-aminoacyl-tRNA deacylase"/>
    <property type="match status" value="1"/>
</dbReference>
<dbReference type="PANTHER" id="PTHR10472:SF5">
    <property type="entry name" value="D-AMINOACYL-TRNA DEACYLASE 1"/>
    <property type="match status" value="1"/>
</dbReference>
<dbReference type="PANTHER" id="PTHR10472">
    <property type="entry name" value="D-TYROSYL-TRNA TYR DEACYLASE"/>
    <property type="match status" value="1"/>
</dbReference>
<dbReference type="Pfam" id="PF02580">
    <property type="entry name" value="Tyr_Deacylase"/>
    <property type="match status" value="1"/>
</dbReference>
<dbReference type="SUPFAM" id="SSF69500">
    <property type="entry name" value="DTD-like"/>
    <property type="match status" value="1"/>
</dbReference>
<feature type="chain" id="PRO_1000050816" description="D-aminoacyl-tRNA deacylase">
    <location>
        <begin position="1"/>
        <end position="152"/>
    </location>
</feature>
<feature type="short sequence motif" description="Gly-cisPro motif, important for rejection of L-amino acids" evidence="1">
    <location>
        <begin position="142"/>
        <end position="143"/>
    </location>
</feature>
<comment type="function">
    <text evidence="1">An aminoacyl-tRNA editing enzyme that deacylates mischarged D-aminoacyl-tRNAs. Also deacylates mischarged glycyl-tRNA(Ala), protecting cells against glycine mischarging by AlaRS. Acts via tRNA-based rather than protein-based catalysis; rejects L-amino acids rather than detecting D-amino acids in the active site. By recycling D-aminoacyl-tRNA to D-amino acids and free tRNA molecules, this enzyme counteracts the toxicity associated with the formation of D-aminoacyl-tRNA entities in vivo and helps enforce protein L-homochirality.</text>
</comment>
<comment type="catalytic activity">
    <reaction evidence="1">
        <text>glycyl-tRNA(Ala) + H2O = tRNA(Ala) + glycine + H(+)</text>
        <dbReference type="Rhea" id="RHEA:53744"/>
        <dbReference type="Rhea" id="RHEA-COMP:9657"/>
        <dbReference type="Rhea" id="RHEA-COMP:13640"/>
        <dbReference type="ChEBI" id="CHEBI:15377"/>
        <dbReference type="ChEBI" id="CHEBI:15378"/>
        <dbReference type="ChEBI" id="CHEBI:57305"/>
        <dbReference type="ChEBI" id="CHEBI:78442"/>
        <dbReference type="ChEBI" id="CHEBI:78522"/>
        <dbReference type="EC" id="3.1.1.96"/>
    </reaction>
</comment>
<comment type="catalytic activity">
    <reaction evidence="1">
        <text>a D-aminoacyl-tRNA + H2O = a tRNA + a D-alpha-amino acid + H(+)</text>
        <dbReference type="Rhea" id="RHEA:13953"/>
        <dbReference type="Rhea" id="RHEA-COMP:10123"/>
        <dbReference type="Rhea" id="RHEA-COMP:10124"/>
        <dbReference type="ChEBI" id="CHEBI:15377"/>
        <dbReference type="ChEBI" id="CHEBI:15378"/>
        <dbReference type="ChEBI" id="CHEBI:59871"/>
        <dbReference type="ChEBI" id="CHEBI:78442"/>
        <dbReference type="ChEBI" id="CHEBI:79333"/>
        <dbReference type="EC" id="3.1.1.96"/>
    </reaction>
</comment>
<comment type="subunit">
    <text evidence="1">Homodimer.</text>
</comment>
<comment type="subcellular location">
    <subcellularLocation>
        <location evidence="1">Cytoplasm</location>
    </subcellularLocation>
</comment>
<comment type="domain">
    <text evidence="1">A Gly-cisPro motif from one monomer fits into the active site of the other monomer to allow specific chiral rejection of L-amino acids.</text>
</comment>
<comment type="similarity">
    <text evidence="1">Belongs to the DTD family.</text>
</comment>
<protein>
    <recommendedName>
        <fullName evidence="1">D-aminoacyl-tRNA deacylase</fullName>
        <shortName evidence="1">DTD</shortName>
        <ecNumber evidence="1">3.1.1.96</ecNumber>
    </recommendedName>
    <alternativeName>
        <fullName evidence="1">Gly-tRNA(Ala) deacylase</fullName>
    </alternativeName>
</protein>